<reference key="1">
    <citation type="journal article" date="1988" name="J. Biol. Chem.">
        <title>Antigenic variation among group A streptococcal M proteins. Nucleotide sequence of the serotype 5 M protein gene and its relationship with genes encoding types 6 and 24 M proteins.</title>
        <authorList>
            <person name="Miller L."/>
            <person name="Gray L."/>
            <person name="Beachey E."/>
            <person name="Kehoe M."/>
        </authorList>
    </citation>
    <scope>NUCLEOTIDE SEQUENCE [GENOMIC DNA]</scope>
</reference>
<reference key="2">
    <citation type="journal article" date="1994" name="Mol. Microbiol.">
        <title>Non-congruent relationships between variation in emm gene sequences and the population genetic structure of group A streptococci.</title>
        <authorList>
            <person name="Whatmore A.M."/>
            <person name="Kapur V."/>
            <person name="Sullivan D.J."/>
            <person name="Musser J.M."/>
            <person name="Kehoe M.A."/>
        </authorList>
    </citation>
    <scope>NUCLEOTIDE SEQUENCE [GENOMIC DNA] OF 30-89</scope>
</reference>
<reference key="3">
    <citation type="journal article" date="1984" name="J. Biol. Chem.">
        <title>The complete amino acid sequence of a biologically active 197-residue fragment of M protein isolated from type 5 group A streptococci.</title>
        <authorList>
            <person name="Manjula B.N."/>
            <person name="Acharya A.S."/>
            <person name="Mische S.M."/>
            <person name="Fairwell T."/>
            <person name="Fischetti V.A."/>
        </authorList>
    </citation>
    <scope>PROTEIN SEQUENCE OF 43-212 AND 238-250</scope>
</reference>
<protein>
    <recommendedName>
        <fullName>M protein, serotype 5</fullName>
    </recommendedName>
</protein>
<proteinExistence type="evidence at protein level"/>
<dbReference type="EMBL" id="M20374">
    <property type="protein sequence ID" value="AAA26976.1"/>
    <property type="molecule type" value="Genomic_DNA"/>
</dbReference>
<dbReference type="PIR" id="A03501">
    <property type="entry name" value="MMSOMP"/>
</dbReference>
<dbReference type="PIR" id="A28616">
    <property type="entry name" value="A28616"/>
</dbReference>
<dbReference type="PDB" id="2KK9">
    <property type="method" value="NMR"/>
    <property type="chains" value="A=300-354"/>
</dbReference>
<dbReference type="PDBsum" id="2KK9"/>
<dbReference type="SMR" id="P02977"/>
<dbReference type="EvolutionaryTrace" id="P02977"/>
<dbReference type="GO" id="GO:0005576">
    <property type="term" value="C:extracellular region"/>
    <property type="evidence" value="ECO:0007669"/>
    <property type="project" value="UniProtKB-KW"/>
</dbReference>
<dbReference type="GO" id="GO:0006909">
    <property type="term" value="P:phagocytosis"/>
    <property type="evidence" value="ECO:0007669"/>
    <property type="project" value="UniProtKB-KW"/>
</dbReference>
<dbReference type="Gene3D" id="6.10.250.460">
    <property type="match status" value="3"/>
</dbReference>
<dbReference type="InterPro" id="IPR019931">
    <property type="entry name" value="LPXTG_anchor"/>
</dbReference>
<dbReference type="InterPro" id="IPR019950">
    <property type="entry name" value="M_anchor"/>
</dbReference>
<dbReference type="InterPro" id="IPR003345">
    <property type="entry name" value="M_repeat"/>
</dbReference>
<dbReference type="InterPro" id="IPR049896">
    <property type="entry name" value="SMCR"/>
</dbReference>
<dbReference type="InterPro" id="IPR049895">
    <property type="entry name" value="SMDRR"/>
</dbReference>
<dbReference type="InterPro" id="IPR005877">
    <property type="entry name" value="YSIRK_signal_dom"/>
</dbReference>
<dbReference type="NCBIfam" id="TIGR01167">
    <property type="entry name" value="LPXTG_anchor"/>
    <property type="match status" value="1"/>
</dbReference>
<dbReference type="NCBIfam" id="NF033777">
    <property type="entry name" value="M_group_A_cterm"/>
    <property type="match status" value="1"/>
</dbReference>
<dbReference type="NCBIfam" id="TIGR01168">
    <property type="entry name" value="YSIRK_signal"/>
    <property type="match status" value="1"/>
</dbReference>
<dbReference type="Pfam" id="PF00746">
    <property type="entry name" value="Gram_pos_anchor"/>
    <property type="match status" value="1"/>
</dbReference>
<dbReference type="Pfam" id="PF02370">
    <property type="entry name" value="M"/>
    <property type="match status" value="2"/>
</dbReference>
<dbReference type="PRINTS" id="PR00015">
    <property type="entry name" value="GPOSANCHOR"/>
</dbReference>
<dbReference type="PROSITE" id="PS50847">
    <property type="entry name" value="GRAM_POS_ANCHORING"/>
    <property type="match status" value="1"/>
</dbReference>
<dbReference type="PROSITE" id="PS52028">
    <property type="entry name" value="SMCR"/>
    <property type="match status" value="3"/>
</dbReference>
<dbReference type="PROSITE" id="PS52030">
    <property type="entry name" value="SMDRR"/>
    <property type="match status" value="1"/>
</dbReference>
<keyword id="KW-0002">3D-structure</keyword>
<keyword id="KW-0134">Cell wall</keyword>
<keyword id="KW-0175">Coiled coil</keyword>
<keyword id="KW-0903">Direct protein sequencing</keyword>
<keyword id="KW-0572">Peptidoglycan-anchor</keyword>
<keyword id="KW-0581">Phagocytosis</keyword>
<keyword id="KW-0677">Repeat</keyword>
<keyword id="KW-0964">Secreted</keyword>
<keyword id="KW-0732">Signal</keyword>
<keyword id="KW-0843">Virulence</keyword>
<comment type="function">
    <text>This protein is one of the different antigenic serotypes of protein M. Protein M is closely associated with virulence of the bacterium and can render the organism resistant to phagocytosis.</text>
</comment>
<comment type="subcellular location">
    <subcellularLocation>
        <location evidence="1">Secreted</location>
        <location evidence="1">Cell wall</location>
        <topology evidence="1">Peptidoglycan-anchor</topology>
    </subcellularLocation>
</comment>
<comment type="similarity">
    <text evidence="6">Belongs to the M protein family.</text>
</comment>
<feature type="signal peptide" evidence="5">
    <location>
        <begin position="1"/>
        <end position="42"/>
    </location>
</feature>
<feature type="chain" id="PRO_0000005615" description="M protein, serotype 5">
    <location>
        <begin position="43"/>
        <end position="461"/>
    </location>
</feature>
<feature type="propeptide" id="PRO_0000005616" description="Removed by sortase" evidence="1">
    <location>
        <begin position="462"/>
        <end position="492"/>
    </location>
</feature>
<feature type="repeat" description="1">
    <location>
        <begin position="69"/>
        <end position="75"/>
    </location>
</feature>
<feature type="repeat" description="2">
    <location>
        <begin position="76"/>
        <end position="82"/>
    </location>
</feature>
<feature type="repeat" description="3">
    <location>
        <begin position="83"/>
        <end position="89"/>
    </location>
</feature>
<feature type="repeat" description="4">
    <location>
        <begin position="90"/>
        <end position="96"/>
    </location>
</feature>
<feature type="repeat" description="5">
    <location>
        <begin position="97"/>
        <end position="103"/>
    </location>
</feature>
<feature type="repeat" description="C 1" evidence="2">
    <location>
        <begin position="251"/>
        <end position="285"/>
    </location>
</feature>
<feature type="repeat" description="C 2" evidence="2">
    <location>
        <begin position="286"/>
        <end position="320"/>
    </location>
</feature>
<feature type="repeat" description="C 3" evidence="2">
    <location>
        <begin position="321"/>
        <end position="355"/>
    </location>
</feature>
<feature type="repeat" description="D 1" evidence="3">
    <location>
        <begin position="388"/>
        <end position="393"/>
    </location>
</feature>
<feature type="repeat" description="D 2" evidence="3">
    <location>
        <begin position="394"/>
        <end position="399"/>
    </location>
</feature>
<feature type="repeat" description="D 3" evidence="3">
    <location>
        <begin position="402"/>
        <end position="407"/>
    </location>
</feature>
<feature type="repeat" description="D 4" evidence="3">
    <location>
        <begin position="409"/>
        <end position="414"/>
    </location>
</feature>
<feature type="region of interest" description="5 X 7 AA tandem repeats of L-K-T-K-N-E-G">
    <location>
        <begin position="69"/>
        <end position="103"/>
    </location>
</feature>
<feature type="region of interest" description="Disordered" evidence="4">
    <location>
        <begin position="71"/>
        <end position="131"/>
    </location>
</feature>
<feature type="region of interest" description="Disordered" evidence="4">
    <location>
        <begin position="235"/>
        <end position="354"/>
    </location>
</feature>
<feature type="region of interest" description="Disordered" evidence="4">
    <location>
        <begin position="408"/>
        <end position="464"/>
    </location>
</feature>
<feature type="short sequence motif" description="LPXTG sorting signal" evidence="1">
    <location>
        <begin position="458"/>
        <end position="462"/>
    </location>
</feature>
<feature type="compositionally biased region" description="Basic and acidic residues" evidence="4">
    <location>
        <begin position="71"/>
        <end position="115"/>
    </location>
</feature>
<feature type="compositionally biased region" description="Basic and acidic residues" evidence="4">
    <location>
        <begin position="249"/>
        <end position="354"/>
    </location>
</feature>
<feature type="modified residue" description="Pentaglycyl murein peptidoglycan amidated threonine" evidence="1">
    <location>
        <position position="461"/>
    </location>
</feature>
<feature type="sequence conflict" description="In Ref. 3; AA sequence." evidence="6" ref="3">
    <original>A</original>
    <variation>T</variation>
    <location>
        <position position="43"/>
    </location>
</feature>
<feature type="sequence conflict" description="In Ref. 3; AA sequence." evidence="6" ref="3">
    <original>N</original>
    <variation>S</variation>
    <location>
        <position position="50"/>
    </location>
</feature>
<feature type="sequence conflict" description="In Ref. 3; AA sequence." evidence="6" ref="3">
    <original>K</original>
    <variation>SNLERKTAELTSEK</variation>
    <location>
        <position position="102"/>
    </location>
</feature>
<feature type="sequence conflict" description="In Ref. 3; AA sequence." evidence="6" ref="3">
    <original>I</original>
    <variation>L</variation>
    <location>
        <position position="208"/>
    </location>
</feature>
<feature type="strand" evidence="7">
    <location>
        <begin position="304"/>
        <end position="307"/>
    </location>
</feature>
<feature type="helix" evidence="7">
    <location>
        <begin position="311"/>
        <end position="332"/>
    </location>
</feature>
<feature type="strand" evidence="7">
    <location>
        <begin position="334"/>
        <end position="340"/>
    </location>
</feature>
<feature type="strand" evidence="7">
    <location>
        <begin position="343"/>
        <end position="345"/>
    </location>
</feature>
<feature type="turn" evidence="7">
    <location>
        <begin position="346"/>
        <end position="349"/>
    </location>
</feature>
<sequence>MARENTNKHYWLRKLKKGTASVAVALSVLGAGLVVNTNEVSAAVTRGTINDPQRAKEALDKYELENHDLKTKNEGLKTENEGLKTENEGLKTENEGLKTEKKEHEAENDKLKQQRDTLSTQKETLEREVQNTQYNNETLKIKNGDLTKELNKTRQELANKQQESKENEKALNELLEKTVKDKIAKEQENKETIGTLKKILDETVKDKIAKEQENKETIGTLKKILDETVKDKLAKEQKSKQNIGALKQELAKKDEANKISDASRKGLRRDLDASREAKKQLEAEHQKLEEQNKISEASRKGLRRDLDASREAKKQLEAEQQKLEEQNKISEASRKGLRRDLDASREAKKQVEKALEEANSKLAALEKLNKELEESKKLTEKEKAELQAKLEAEAKALKEQLAKQAEELAKLRAGKASDSQTPDTKPGNKAVPGKGQAPQAGTKPNQNKAPMKETKRQLPSTGETANPFFTAAALTVMATAGVAAVVKRKEEN</sequence>
<name>M5_STRP5</name>
<gene>
    <name type="primary">emm5</name>
    <name type="synonym">smp5</name>
</gene>
<accession>P02977</accession>
<evidence type="ECO:0000255" key="1">
    <source>
        <dbReference type="PROSITE-ProRule" id="PRU00477"/>
    </source>
</evidence>
<evidence type="ECO:0000255" key="2">
    <source>
        <dbReference type="PROSITE-ProRule" id="PRU01372"/>
    </source>
</evidence>
<evidence type="ECO:0000255" key="3">
    <source>
        <dbReference type="PROSITE-ProRule" id="PRU01374"/>
    </source>
</evidence>
<evidence type="ECO:0000256" key="4">
    <source>
        <dbReference type="SAM" id="MobiDB-lite"/>
    </source>
</evidence>
<evidence type="ECO:0000269" key="5">
    <source>
    </source>
</evidence>
<evidence type="ECO:0000305" key="6"/>
<evidence type="ECO:0007829" key="7">
    <source>
        <dbReference type="PDB" id="2KK9"/>
    </source>
</evidence>
<organism>
    <name type="scientific">Streptococcus pyogenes serotype M5</name>
    <dbReference type="NCBI Taxonomy" id="301449"/>
    <lineage>
        <taxon>Bacteria</taxon>
        <taxon>Bacillati</taxon>
        <taxon>Bacillota</taxon>
        <taxon>Bacilli</taxon>
        <taxon>Lactobacillales</taxon>
        <taxon>Streptococcaceae</taxon>
        <taxon>Streptococcus</taxon>
    </lineage>
</organism>